<protein>
    <recommendedName>
        <fullName evidence="1">D-amino acid dehydrogenase</fullName>
        <ecNumber evidence="1">1.4.99.-</ecNumber>
    </recommendedName>
</protein>
<gene>
    <name evidence="1" type="primary">dadA</name>
    <name type="ordered locus">Daro_3842</name>
</gene>
<evidence type="ECO:0000255" key="1">
    <source>
        <dbReference type="HAMAP-Rule" id="MF_01202"/>
    </source>
</evidence>
<accession>Q479B1</accession>
<proteinExistence type="inferred from homology"/>
<feature type="chain" id="PRO_1000066089" description="D-amino acid dehydrogenase">
    <location>
        <begin position="1"/>
        <end position="418"/>
    </location>
</feature>
<feature type="binding site" evidence="1">
    <location>
        <begin position="3"/>
        <end position="17"/>
    </location>
    <ligand>
        <name>FAD</name>
        <dbReference type="ChEBI" id="CHEBI:57692"/>
    </ligand>
</feature>
<dbReference type="EC" id="1.4.99.-" evidence="1"/>
<dbReference type="EMBL" id="CP000089">
    <property type="protein sequence ID" value="AAZ48570.1"/>
    <property type="molecule type" value="Genomic_DNA"/>
</dbReference>
<dbReference type="SMR" id="Q479B1"/>
<dbReference type="STRING" id="159087.Daro_3842"/>
<dbReference type="KEGG" id="dar:Daro_3842"/>
<dbReference type="eggNOG" id="COG0665">
    <property type="taxonomic scope" value="Bacteria"/>
</dbReference>
<dbReference type="HOGENOM" id="CLU_007884_9_2_4"/>
<dbReference type="OrthoDB" id="18526at2"/>
<dbReference type="UniPathway" id="UPA00043">
    <property type="reaction ID" value="UER00498"/>
</dbReference>
<dbReference type="GO" id="GO:0005737">
    <property type="term" value="C:cytoplasm"/>
    <property type="evidence" value="ECO:0007669"/>
    <property type="project" value="TreeGrafter"/>
</dbReference>
<dbReference type="GO" id="GO:0005886">
    <property type="term" value="C:plasma membrane"/>
    <property type="evidence" value="ECO:0007669"/>
    <property type="project" value="TreeGrafter"/>
</dbReference>
<dbReference type="GO" id="GO:0008718">
    <property type="term" value="F:D-amino-acid dehydrogenase activity"/>
    <property type="evidence" value="ECO:0007669"/>
    <property type="project" value="UniProtKB-UniRule"/>
</dbReference>
<dbReference type="GO" id="GO:0055130">
    <property type="term" value="P:D-alanine catabolic process"/>
    <property type="evidence" value="ECO:0007669"/>
    <property type="project" value="UniProtKB-UniPathway"/>
</dbReference>
<dbReference type="Gene3D" id="3.30.9.10">
    <property type="entry name" value="D-Amino Acid Oxidase, subunit A, domain 2"/>
    <property type="match status" value="1"/>
</dbReference>
<dbReference type="Gene3D" id="3.50.50.60">
    <property type="entry name" value="FAD/NAD(P)-binding domain"/>
    <property type="match status" value="2"/>
</dbReference>
<dbReference type="HAMAP" id="MF_01202">
    <property type="entry name" value="DadA"/>
    <property type="match status" value="1"/>
</dbReference>
<dbReference type="InterPro" id="IPR023080">
    <property type="entry name" value="DadA"/>
</dbReference>
<dbReference type="InterPro" id="IPR006076">
    <property type="entry name" value="FAD-dep_OxRdtase"/>
</dbReference>
<dbReference type="InterPro" id="IPR036188">
    <property type="entry name" value="FAD/NAD-bd_sf"/>
</dbReference>
<dbReference type="NCBIfam" id="NF001933">
    <property type="entry name" value="PRK00711.1"/>
    <property type="match status" value="1"/>
</dbReference>
<dbReference type="PANTHER" id="PTHR13847:SF280">
    <property type="entry name" value="D-AMINO ACID DEHYDROGENASE"/>
    <property type="match status" value="1"/>
</dbReference>
<dbReference type="PANTHER" id="PTHR13847">
    <property type="entry name" value="SARCOSINE DEHYDROGENASE-RELATED"/>
    <property type="match status" value="1"/>
</dbReference>
<dbReference type="Pfam" id="PF01266">
    <property type="entry name" value="DAO"/>
    <property type="match status" value="1"/>
</dbReference>
<dbReference type="SUPFAM" id="SSF54373">
    <property type="entry name" value="FAD-linked reductases, C-terminal domain"/>
    <property type="match status" value="1"/>
</dbReference>
<dbReference type="SUPFAM" id="SSF51905">
    <property type="entry name" value="FAD/NAD(P)-binding domain"/>
    <property type="match status" value="1"/>
</dbReference>
<comment type="function">
    <text evidence="1">Oxidative deamination of D-amino acids.</text>
</comment>
<comment type="catalytic activity">
    <reaction evidence="1">
        <text>a D-alpha-amino acid + A + H2O = a 2-oxocarboxylate + AH2 + NH4(+)</text>
        <dbReference type="Rhea" id="RHEA:18125"/>
        <dbReference type="ChEBI" id="CHEBI:13193"/>
        <dbReference type="ChEBI" id="CHEBI:15377"/>
        <dbReference type="ChEBI" id="CHEBI:17499"/>
        <dbReference type="ChEBI" id="CHEBI:28938"/>
        <dbReference type="ChEBI" id="CHEBI:35179"/>
        <dbReference type="ChEBI" id="CHEBI:59871"/>
    </reaction>
</comment>
<comment type="cofactor">
    <cofactor evidence="1">
        <name>FAD</name>
        <dbReference type="ChEBI" id="CHEBI:57692"/>
    </cofactor>
</comment>
<comment type="pathway">
    <text>Amino-acid degradation; D-alanine degradation; NH(3) and pyruvate from D-alanine: step 1/1.</text>
</comment>
<comment type="similarity">
    <text evidence="1">Belongs to the DadA oxidoreductase family.</text>
</comment>
<keyword id="KW-0274">FAD</keyword>
<keyword id="KW-0285">Flavoprotein</keyword>
<keyword id="KW-0560">Oxidoreductase</keyword>
<name>DADA_DECAR</name>
<sequence length="418" mass="45831">MRVLVLGAGVVGTTSAWYLARAGHQVTVVDRQPVAGNETSFANGGQISVSHAEPWANPHVLPRVLKWLGREDAPLLWRWRADPAQLAWGLRFLGECFPGRVRRNIAAIVSMALYSRGRLQALREELGLQYDHLERGILHIYTDRDEFSAALDAARVMRQFGLDRDTVDVDKCLEIEPALSGARHLLVGGDYTRSDESGDANKFTCALAEHAKAAGVDFRYGLTVERIATSGSEIVGVLVQHSEGGPERLTADAYVVALGSYSPLLLRPIGVGLPVYPAKGYSATLTLAEASLAPTVSLTDDERKLVFSRLGNRLRIAGTAEFNGYNLELNPVRCQALIDRTRQLFPRLEIVGEPTLWCGLRPATPSNVPYIGQTRYRNLWLNTGHGTLGWTMACGSAASLAEMISGRRPEPEFPFLRC</sequence>
<reference key="1">
    <citation type="journal article" date="2009" name="BMC Genomics">
        <title>Metabolic analysis of the soil microbe Dechloromonas aromatica str. RCB: indications of a surprisingly complex life-style and cryptic anaerobic pathways for aromatic degradation.</title>
        <authorList>
            <person name="Salinero K.K."/>
            <person name="Keller K."/>
            <person name="Feil W.S."/>
            <person name="Feil H."/>
            <person name="Trong S."/>
            <person name="Di Bartolo G."/>
            <person name="Lapidus A."/>
        </authorList>
    </citation>
    <scope>NUCLEOTIDE SEQUENCE [LARGE SCALE GENOMIC DNA]</scope>
    <source>
        <strain>RCB</strain>
    </source>
</reference>
<organism>
    <name type="scientific">Dechloromonas aromatica (strain RCB)</name>
    <dbReference type="NCBI Taxonomy" id="159087"/>
    <lineage>
        <taxon>Bacteria</taxon>
        <taxon>Pseudomonadati</taxon>
        <taxon>Pseudomonadota</taxon>
        <taxon>Betaproteobacteria</taxon>
        <taxon>Rhodocyclales</taxon>
        <taxon>Azonexaceae</taxon>
        <taxon>Dechloromonas</taxon>
    </lineage>
</organism>